<organism>
    <name type="scientific">Lycosa singoriensis</name>
    <name type="common">Wolf spider</name>
    <name type="synonym">Aranea singoriensis</name>
    <dbReference type="NCBI Taxonomy" id="434756"/>
    <lineage>
        <taxon>Eukaryota</taxon>
        <taxon>Metazoa</taxon>
        <taxon>Ecdysozoa</taxon>
        <taxon>Arthropoda</taxon>
        <taxon>Chelicerata</taxon>
        <taxon>Arachnida</taxon>
        <taxon>Araneae</taxon>
        <taxon>Araneomorphae</taxon>
        <taxon>Entelegynae</taxon>
        <taxon>Lycosoidea</taxon>
        <taxon>Lycosidae</taxon>
        <taxon>Lycosa</taxon>
    </lineage>
</organism>
<protein>
    <recommendedName>
        <fullName>Toxin-like structure LSTX-R1</fullName>
    </recommendedName>
</protein>
<name>TXX01_LYCSI</name>
<feature type="signal peptide" evidence="2">
    <location>
        <begin position="1"/>
        <end position="18"/>
    </location>
</feature>
<feature type="propeptide" id="PRO_0000401913" evidence="1">
    <location>
        <begin position="19"/>
        <end position="51"/>
    </location>
</feature>
<feature type="chain" id="PRO_0000401914" description="Toxin-like structure LSTX-R1">
    <location>
        <begin position="52"/>
        <end position="115"/>
    </location>
</feature>
<keyword id="KW-1015">Disulfide bond</keyword>
<keyword id="KW-0964">Secreted</keyword>
<keyword id="KW-0732">Signal</keyword>
<keyword id="KW-0800">Toxin</keyword>
<evidence type="ECO:0000250" key="1"/>
<evidence type="ECO:0000255" key="2"/>
<evidence type="ECO:0000305" key="3"/>
<dbReference type="EMBL" id="EU926143">
    <property type="protein sequence ID" value="ACI41475.1"/>
    <property type="molecule type" value="mRNA"/>
</dbReference>
<dbReference type="EMBL" id="FM864147">
    <property type="protein sequence ID" value="CAS03744.1"/>
    <property type="molecule type" value="mRNA"/>
</dbReference>
<dbReference type="GO" id="GO:0005576">
    <property type="term" value="C:extracellular region"/>
    <property type="evidence" value="ECO:0007669"/>
    <property type="project" value="UniProtKB-SubCell"/>
</dbReference>
<dbReference type="GO" id="GO:0090729">
    <property type="term" value="F:toxin activity"/>
    <property type="evidence" value="ECO:0007669"/>
    <property type="project" value="UniProtKB-KW"/>
</dbReference>
<sequence>MKLSLIIIATSLVIAVVAFPSKDSAATDFDKTESLENVEERVETALDERPRACSKNPGESCTNNCECCGATVVCASVYVAGVEKKSCKSKTSDNGFLNIIGQAANAVQNAASLCV</sequence>
<comment type="subcellular location">
    <subcellularLocation>
        <location evidence="1">Secreted</location>
    </subcellularLocation>
</comment>
<comment type="tissue specificity">
    <text>Expressed by the venom gland.</text>
</comment>
<comment type="PTM">
    <text evidence="1">Contains 4 disulfide bonds.</text>
</comment>
<comment type="similarity">
    <text evidence="3">Belongs to the neurotoxin 25 family. F7 subfamily.</text>
</comment>
<proteinExistence type="evidence at transcript level"/>
<reference key="1">
    <citation type="journal article" date="2010" name="Zoology">
        <title>Transcriptome analysis of the venom glands of the Chinese wolf spider Lycosa singoriensis.</title>
        <authorList>
            <person name="Zhang Y."/>
            <person name="Chen J."/>
            <person name="Tang X."/>
            <person name="Wang F."/>
            <person name="Jiang L."/>
            <person name="Xiong X."/>
            <person name="Wang M."/>
            <person name="Rong M."/>
            <person name="Liu Z."/>
            <person name="Liang S."/>
        </authorList>
    </citation>
    <scope>NUCLEOTIDE SEQUENCE [LARGE SCALE MRNA]</scope>
    <source>
        <tissue>Venom gland</tissue>
    </source>
</reference>
<accession>B6DD59</accession>